<reference key="1">
    <citation type="journal article" date="2001" name="Mol. Biol. Evol.">
        <title>Mechanisms for evolving hypervariability: the case of conopeptides.</title>
        <authorList>
            <person name="Conticello S.G."/>
            <person name="Gilad Y."/>
            <person name="Avidan N."/>
            <person name="Ben-Asher E."/>
            <person name="Levy Z."/>
            <person name="Fainzilber M."/>
        </authorList>
    </citation>
    <scope>NUCLEOTIDE SEQUENCE [MRNA]</scope>
    <source>
        <tissue>Venom duct</tissue>
    </source>
</reference>
<organism>
    <name type="scientific">Conus textile</name>
    <name type="common">Cloth-of-gold cone</name>
    <dbReference type="NCBI Taxonomy" id="6494"/>
    <lineage>
        <taxon>Eukaryota</taxon>
        <taxon>Metazoa</taxon>
        <taxon>Spiralia</taxon>
        <taxon>Lophotrochozoa</taxon>
        <taxon>Mollusca</taxon>
        <taxon>Gastropoda</taxon>
        <taxon>Caenogastropoda</taxon>
        <taxon>Neogastropoda</taxon>
        <taxon>Conoidea</taxon>
        <taxon>Conidae</taxon>
        <taxon>Conus</taxon>
        <taxon>Cylinder</taxon>
    </lineage>
</organism>
<evidence type="ECO:0000250" key="1"/>
<evidence type="ECO:0000250" key="2">
    <source>
        <dbReference type="UniProtKB" id="P0CI24"/>
    </source>
</evidence>
<evidence type="ECO:0000255" key="3"/>
<evidence type="ECO:0000305" key="4"/>
<accession>Q9BPJ1</accession>
<comment type="subcellular location">
    <subcellularLocation>
        <location evidence="1">Secreted</location>
    </subcellularLocation>
</comment>
<comment type="tissue specificity">
    <text>Expressed by the venom duct.</text>
</comment>
<comment type="domain">
    <text>The cysteine framework is III (CC-C-C-CC). Classified in the M-2 branch, since 2 residues stand between the fourth and the fifth cysteine residues.</text>
</comment>
<comment type="similarity">
    <text evidence="4">Belongs to the conotoxin M superfamily.</text>
</comment>
<proteinExistence type="evidence at transcript level"/>
<sequence>MMSKLGVLLITCLLLFPLTAVPLDGDQPADQPAERLQDDISSENHPFFDPVKRCCRLLCLSCNPCCG</sequence>
<protein>
    <recommendedName>
        <fullName>Conotoxin TxMMSK-01</fullName>
    </recommendedName>
</protein>
<keyword id="KW-0027">Amidation</keyword>
<keyword id="KW-0165">Cleavage on pair of basic residues</keyword>
<keyword id="KW-1015">Disulfide bond</keyword>
<keyword id="KW-0379">Hydroxylation</keyword>
<keyword id="KW-0964">Secreted</keyword>
<keyword id="KW-0732">Signal</keyword>
<keyword id="KW-0800">Toxin</keyword>
<name>M01_CONTE</name>
<feature type="signal peptide" evidence="3">
    <location>
        <begin position="1"/>
        <end position="20"/>
    </location>
</feature>
<feature type="propeptide" id="PRO_0000315535" evidence="1">
    <location>
        <begin position="21"/>
        <end position="53"/>
    </location>
</feature>
<feature type="peptide" id="PRO_0000315536" description="Conotoxin TxMMSK-01">
    <location>
        <begin position="54"/>
        <end position="66"/>
    </location>
</feature>
<feature type="modified residue" description="4-hydroxyproline" evidence="1">
    <location>
        <position position="64"/>
    </location>
</feature>
<feature type="modified residue" description="Cysteine amide" evidence="1">
    <location>
        <position position="66"/>
    </location>
</feature>
<feature type="disulfide bond" evidence="2">
    <location>
        <begin position="54"/>
        <end position="66"/>
    </location>
</feature>
<feature type="disulfide bond" evidence="2">
    <location>
        <begin position="55"/>
        <end position="62"/>
    </location>
</feature>
<feature type="disulfide bond" evidence="2">
    <location>
        <begin position="59"/>
        <end position="65"/>
    </location>
</feature>
<dbReference type="EMBL" id="AF214933">
    <property type="protein sequence ID" value="AAG60361.1"/>
    <property type="molecule type" value="mRNA"/>
</dbReference>
<dbReference type="ConoServer" id="620">
    <property type="toxin name" value="TxMMSK-01 precursor"/>
</dbReference>
<dbReference type="GO" id="GO:0005576">
    <property type="term" value="C:extracellular region"/>
    <property type="evidence" value="ECO:0007669"/>
    <property type="project" value="UniProtKB-SubCell"/>
</dbReference>
<dbReference type="GO" id="GO:0008200">
    <property type="term" value="F:ion channel inhibitor activity"/>
    <property type="evidence" value="ECO:0007669"/>
    <property type="project" value="InterPro"/>
</dbReference>
<dbReference type="GO" id="GO:0090729">
    <property type="term" value="F:toxin activity"/>
    <property type="evidence" value="ECO:0007669"/>
    <property type="project" value="UniProtKB-KW"/>
</dbReference>
<dbReference type="InterPro" id="IPR004214">
    <property type="entry name" value="Conotoxin"/>
</dbReference>
<dbReference type="Pfam" id="PF02950">
    <property type="entry name" value="Conotoxin"/>
    <property type="match status" value="1"/>
</dbReference>